<evidence type="ECO:0000255" key="1">
    <source>
        <dbReference type="HAMAP-Rule" id="MF_00123"/>
    </source>
</evidence>
<proteinExistence type="inferred from homology"/>
<comment type="catalytic activity">
    <reaction evidence="1">
        <text>tRNA(Arg) + L-arginine + ATP = L-arginyl-tRNA(Arg) + AMP + diphosphate</text>
        <dbReference type="Rhea" id="RHEA:20301"/>
        <dbReference type="Rhea" id="RHEA-COMP:9658"/>
        <dbReference type="Rhea" id="RHEA-COMP:9673"/>
        <dbReference type="ChEBI" id="CHEBI:30616"/>
        <dbReference type="ChEBI" id="CHEBI:32682"/>
        <dbReference type="ChEBI" id="CHEBI:33019"/>
        <dbReference type="ChEBI" id="CHEBI:78442"/>
        <dbReference type="ChEBI" id="CHEBI:78513"/>
        <dbReference type="ChEBI" id="CHEBI:456215"/>
        <dbReference type="EC" id="6.1.1.19"/>
    </reaction>
</comment>
<comment type="subcellular location">
    <subcellularLocation>
        <location evidence="1">Cytoplasm</location>
    </subcellularLocation>
</comment>
<comment type="similarity">
    <text evidence="1">Belongs to the class-I aminoacyl-tRNA synthetase family.</text>
</comment>
<dbReference type="EC" id="6.1.1.19" evidence="1"/>
<dbReference type="EMBL" id="AE006641">
    <property type="protein sequence ID" value="AAK41148.1"/>
    <property type="molecule type" value="Genomic_DNA"/>
</dbReference>
<dbReference type="PIR" id="E90236">
    <property type="entry name" value="E90236"/>
</dbReference>
<dbReference type="RefSeq" id="WP_010923143.1">
    <property type="nucleotide sequence ID" value="NC_002754.1"/>
</dbReference>
<dbReference type="SMR" id="Q97ZN1"/>
<dbReference type="FunCoup" id="Q97ZN1">
    <property type="interactions" value="274"/>
</dbReference>
<dbReference type="STRING" id="273057.SSO0857"/>
<dbReference type="PaxDb" id="273057-SSO0857"/>
<dbReference type="EnsemblBacteria" id="AAK41148">
    <property type="protein sequence ID" value="AAK41148"/>
    <property type="gene ID" value="SSO0857"/>
</dbReference>
<dbReference type="GeneID" id="7806735"/>
<dbReference type="KEGG" id="sso:SSO0857"/>
<dbReference type="PATRIC" id="fig|273057.12.peg.869"/>
<dbReference type="eggNOG" id="arCOG00487">
    <property type="taxonomic scope" value="Archaea"/>
</dbReference>
<dbReference type="HOGENOM" id="CLU_006406_6_1_2"/>
<dbReference type="InParanoid" id="Q97ZN1"/>
<dbReference type="PhylomeDB" id="Q97ZN1"/>
<dbReference type="Proteomes" id="UP000001974">
    <property type="component" value="Chromosome"/>
</dbReference>
<dbReference type="GO" id="GO:0005737">
    <property type="term" value="C:cytoplasm"/>
    <property type="evidence" value="ECO:0007669"/>
    <property type="project" value="UniProtKB-SubCell"/>
</dbReference>
<dbReference type="GO" id="GO:0004814">
    <property type="term" value="F:arginine-tRNA ligase activity"/>
    <property type="evidence" value="ECO:0000318"/>
    <property type="project" value="GO_Central"/>
</dbReference>
<dbReference type="GO" id="GO:0005524">
    <property type="term" value="F:ATP binding"/>
    <property type="evidence" value="ECO:0007669"/>
    <property type="project" value="UniProtKB-UniRule"/>
</dbReference>
<dbReference type="GO" id="GO:0006420">
    <property type="term" value="P:arginyl-tRNA aminoacylation"/>
    <property type="evidence" value="ECO:0000318"/>
    <property type="project" value="GO_Central"/>
</dbReference>
<dbReference type="CDD" id="cd00671">
    <property type="entry name" value="ArgRS_core"/>
    <property type="match status" value="1"/>
</dbReference>
<dbReference type="FunFam" id="1.10.730.10:FF:000006">
    <property type="entry name" value="Arginyl-tRNA synthetase 2, mitochondrial"/>
    <property type="match status" value="1"/>
</dbReference>
<dbReference type="Gene3D" id="3.30.1360.70">
    <property type="entry name" value="Arginyl tRNA synthetase N-terminal domain"/>
    <property type="match status" value="1"/>
</dbReference>
<dbReference type="Gene3D" id="3.40.50.620">
    <property type="entry name" value="HUPs"/>
    <property type="match status" value="1"/>
</dbReference>
<dbReference type="Gene3D" id="1.10.730.10">
    <property type="entry name" value="Isoleucyl-tRNA Synthetase, Domain 1"/>
    <property type="match status" value="1"/>
</dbReference>
<dbReference type="HAMAP" id="MF_00123">
    <property type="entry name" value="Arg_tRNA_synth"/>
    <property type="match status" value="1"/>
</dbReference>
<dbReference type="InterPro" id="IPR001278">
    <property type="entry name" value="Arg-tRNA-ligase"/>
</dbReference>
<dbReference type="InterPro" id="IPR005148">
    <property type="entry name" value="Arg-tRNA-synth_N"/>
</dbReference>
<dbReference type="InterPro" id="IPR036695">
    <property type="entry name" value="Arg-tRNA-synth_N_sf"/>
</dbReference>
<dbReference type="InterPro" id="IPR035684">
    <property type="entry name" value="ArgRS_core"/>
</dbReference>
<dbReference type="InterPro" id="IPR008909">
    <property type="entry name" value="DALR_anticod-bd"/>
</dbReference>
<dbReference type="InterPro" id="IPR014729">
    <property type="entry name" value="Rossmann-like_a/b/a_fold"/>
</dbReference>
<dbReference type="InterPro" id="IPR009080">
    <property type="entry name" value="tRNAsynth_Ia_anticodon-bd"/>
</dbReference>
<dbReference type="NCBIfam" id="TIGR00456">
    <property type="entry name" value="argS"/>
    <property type="match status" value="1"/>
</dbReference>
<dbReference type="NCBIfam" id="NF002446">
    <property type="entry name" value="PRK01611.3-3"/>
    <property type="match status" value="1"/>
</dbReference>
<dbReference type="PANTHER" id="PTHR11956:SF5">
    <property type="entry name" value="ARGININE--TRNA LIGASE, CYTOPLASMIC"/>
    <property type="match status" value="1"/>
</dbReference>
<dbReference type="PANTHER" id="PTHR11956">
    <property type="entry name" value="ARGINYL-TRNA SYNTHETASE"/>
    <property type="match status" value="1"/>
</dbReference>
<dbReference type="Pfam" id="PF05746">
    <property type="entry name" value="DALR_1"/>
    <property type="match status" value="1"/>
</dbReference>
<dbReference type="Pfam" id="PF00750">
    <property type="entry name" value="tRNA-synt_1d"/>
    <property type="match status" value="2"/>
</dbReference>
<dbReference type="PRINTS" id="PR01038">
    <property type="entry name" value="TRNASYNTHARG"/>
</dbReference>
<dbReference type="SMART" id="SM01016">
    <property type="entry name" value="Arg_tRNA_synt_N"/>
    <property type="match status" value="1"/>
</dbReference>
<dbReference type="SMART" id="SM00836">
    <property type="entry name" value="DALR_1"/>
    <property type="match status" value="1"/>
</dbReference>
<dbReference type="SUPFAM" id="SSF47323">
    <property type="entry name" value="Anticodon-binding domain of a subclass of class I aminoacyl-tRNA synthetases"/>
    <property type="match status" value="1"/>
</dbReference>
<dbReference type="SUPFAM" id="SSF55190">
    <property type="entry name" value="Arginyl-tRNA synthetase (ArgRS), N-terminal 'additional' domain"/>
    <property type="match status" value="1"/>
</dbReference>
<dbReference type="SUPFAM" id="SSF52374">
    <property type="entry name" value="Nucleotidylyl transferase"/>
    <property type="match status" value="1"/>
</dbReference>
<reference key="1">
    <citation type="journal article" date="2001" name="Proc. Natl. Acad. Sci. U.S.A.">
        <title>The complete genome of the crenarchaeon Sulfolobus solfataricus P2.</title>
        <authorList>
            <person name="She Q."/>
            <person name="Singh R.K."/>
            <person name="Confalonieri F."/>
            <person name="Zivanovic Y."/>
            <person name="Allard G."/>
            <person name="Awayez M.J."/>
            <person name="Chan-Weiher C.C.-Y."/>
            <person name="Clausen I.G."/>
            <person name="Curtis B.A."/>
            <person name="De Moors A."/>
            <person name="Erauso G."/>
            <person name="Fletcher C."/>
            <person name="Gordon P.M.K."/>
            <person name="Heikamp-de Jong I."/>
            <person name="Jeffries A.C."/>
            <person name="Kozera C.J."/>
            <person name="Medina N."/>
            <person name="Peng X."/>
            <person name="Thi-Ngoc H.P."/>
            <person name="Redder P."/>
            <person name="Schenk M.E."/>
            <person name="Theriault C."/>
            <person name="Tolstrup N."/>
            <person name="Charlebois R.L."/>
            <person name="Doolittle W.F."/>
            <person name="Duguet M."/>
            <person name="Gaasterland T."/>
            <person name="Garrett R.A."/>
            <person name="Ragan M.A."/>
            <person name="Sensen C.W."/>
            <person name="Van der Oost J."/>
        </authorList>
    </citation>
    <scope>NUCLEOTIDE SEQUENCE [LARGE SCALE GENOMIC DNA]</scope>
    <source>
        <strain>ATCC 35092 / DSM 1617 / JCM 11322 / P2</strain>
    </source>
</reference>
<accession>Q97ZN1</accession>
<feature type="chain" id="PRO_0000151656" description="Arginine--tRNA ligase">
    <location>
        <begin position="1"/>
        <end position="625"/>
    </location>
</feature>
<feature type="short sequence motif" description="'HIGH' region">
    <location>
        <begin position="117"/>
        <end position="127"/>
    </location>
</feature>
<organism>
    <name type="scientific">Saccharolobus solfataricus (strain ATCC 35092 / DSM 1617 / JCM 11322 / P2)</name>
    <name type="common">Sulfolobus solfataricus</name>
    <dbReference type="NCBI Taxonomy" id="273057"/>
    <lineage>
        <taxon>Archaea</taxon>
        <taxon>Thermoproteota</taxon>
        <taxon>Thermoprotei</taxon>
        <taxon>Sulfolobales</taxon>
        <taxon>Sulfolobaceae</taxon>
        <taxon>Saccharolobus</taxon>
    </lineage>
</organism>
<sequence length="625" mass="71387">MDIIGRAKKELAEYVAAQLGISEEEVFKNITYPPREELGDLSLALPSLIKGNINEKAKLLQEYKGELIERIEVAGIYLNARLNLRNIFVSIFSKLDDSYGLEKIEKPKRIVVEHTSANPIHPLHIGHLRNTILGDALARALKARGHSVNVRFYVNDTGRQVAVLIYGLKLLGFPDPEPNVKKDLWLGIIYAMTNVILEIRKLREELKKLSESEYREKVRELDELIVIANDLRNRNEVLFDKLADAINAKEEPEKEIGEIIKKYEEGNDELKGIIRKYISYALEGFSETLSKLNIRFDNFDYESDLLWENMVNEVLKALLSSSAKIPYKGVIALDLDSFLGDEARSKLRIPKGLKIPPLVLMRSDGTTLYTVRDIAYTIFKFNQFNADFVINVIAEEQYIPQIQLRGALELLGYSRFAENLLHYSYGMVNIQGLRMSGRLGKIITIDEIYEKLDNIVRNKLKEKGGNMENIDDIANAALRYAILSVSANKPLSFDLNRITSFEQNSGPYLQYTYARAANILAKSTENLSMDKVDFSDLVGDKRNILILIAKFPEVFKNAVDNLRLEDLVAFLRELSDIFNSWYDKERVLQEQDPRKRMLRLYIVKGVSVVLKNGLSVLGIRSLERM</sequence>
<protein>
    <recommendedName>
        <fullName evidence="1">Arginine--tRNA ligase</fullName>
        <ecNumber evidence="1">6.1.1.19</ecNumber>
    </recommendedName>
    <alternativeName>
        <fullName evidence="1">Arginyl-tRNA synthetase</fullName>
        <shortName evidence="1">ArgRS</shortName>
    </alternativeName>
</protein>
<name>SYR_SACS2</name>
<gene>
    <name evidence="1" type="primary">argS</name>
    <name type="ordered locus">SSO0857</name>
</gene>
<keyword id="KW-0030">Aminoacyl-tRNA synthetase</keyword>
<keyword id="KW-0067">ATP-binding</keyword>
<keyword id="KW-0963">Cytoplasm</keyword>
<keyword id="KW-0436">Ligase</keyword>
<keyword id="KW-0547">Nucleotide-binding</keyword>
<keyword id="KW-0648">Protein biosynthesis</keyword>
<keyword id="KW-1185">Reference proteome</keyword>